<dbReference type="EC" id="6.2.1.-" evidence="2"/>
<dbReference type="EMBL" id="ADCP02000001">
    <property type="protein sequence ID" value="EFV43626.1"/>
    <property type="molecule type" value="Genomic_DNA"/>
</dbReference>
<dbReference type="RefSeq" id="WP_005028461.1">
    <property type="nucleotide sequence ID" value="NZ_KE150238.1"/>
</dbReference>
<dbReference type="SMR" id="E5Y8P7"/>
<dbReference type="STRING" id="563192.HMPREF0179_02565"/>
<dbReference type="GeneID" id="78085694"/>
<dbReference type="eggNOG" id="COG0074">
    <property type="taxonomic scope" value="Bacteria"/>
</dbReference>
<dbReference type="HOGENOM" id="CLU_052104_0_0_7"/>
<dbReference type="OrthoDB" id="9802602at2"/>
<dbReference type="Proteomes" id="UP000006034">
    <property type="component" value="Unassembled WGS sequence"/>
</dbReference>
<dbReference type="GO" id="GO:0009361">
    <property type="term" value="C:succinate-CoA ligase complex (ADP-forming)"/>
    <property type="evidence" value="ECO:0007669"/>
    <property type="project" value="TreeGrafter"/>
</dbReference>
<dbReference type="GO" id="GO:0000166">
    <property type="term" value="F:nucleotide binding"/>
    <property type="evidence" value="ECO:0007669"/>
    <property type="project" value="UniProtKB-KW"/>
</dbReference>
<dbReference type="GO" id="GO:0004775">
    <property type="term" value="F:succinate-CoA ligase (ADP-forming) activity"/>
    <property type="evidence" value="ECO:0007669"/>
    <property type="project" value="UniProtKB-EC"/>
</dbReference>
<dbReference type="GO" id="GO:0004776">
    <property type="term" value="F:succinate-CoA ligase (GDP-forming) activity"/>
    <property type="evidence" value="ECO:0007669"/>
    <property type="project" value="TreeGrafter"/>
</dbReference>
<dbReference type="GO" id="GO:0006099">
    <property type="term" value="P:tricarboxylic acid cycle"/>
    <property type="evidence" value="ECO:0007669"/>
    <property type="project" value="TreeGrafter"/>
</dbReference>
<dbReference type="FunFam" id="3.40.50.720:FF:000277">
    <property type="entry name" value="Succinate--CoA ligase [ADP-forming] subunit alpha"/>
    <property type="match status" value="1"/>
</dbReference>
<dbReference type="Gene3D" id="3.40.50.720">
    <property type="entry name" value="NAD(P)-binding Rossmann-like Domain"/>
    <property type="match status" value="1"/>
</dbReference>
<dbReference type="Gene3D" id="3.40.50.261">
    <property type="entry name" value="Succinyl-CoA synthetase domains"/>
    <property type="match status" value="1"/>
</dbReference>
<dbReference type="InterPro" id="IPR017440">
    <property type="entry name" value="Cit_synth/succinyl-CoA_lig_AS"/>
</dbReference>
<dbReference type="InterPro" id="IPR003781">
    <property type="entry name" value="CoA-bd"/>
</dbReference>
<dbReference type="InterPro" id="IPR005810">
    <property type="entry name" value="CoA_lig_alpha"/>
</dbReference>
<dbReference type="InterPro" id="IPR036291">
    <property type="entry name" value="NAD(P)-bd_dom_sf"/>
</dbReference>
<dbReference type="InterPro" id="IPR005811">
    <property type="entry name" value="SUCC_ACL_C"/>
</dbReference>
<dbReference type="InterPro" id="IPR016102">
    <property type="entry name" value="Succinyl-CoA_synth-like"/>
</dbReference>
<dbReference type="PANTHER" id="PTHR11117:SF2">
    <property type="entry name" value="SUCCINATE--COA LIGASE [ADP_GDP-FORMING] SUBUNIT ALPHA, MITOCHONDRIAL"/>
    <property type="match status" value="1"/>
</dbReference>
<dbReference type="PANTHER" id="PTHR11117">
    <property type="entry name" value="SUCCINYL-COA LIGASE SUBUNIT ALPHA"/>
    <property type="match status" value="1"/>
</dbReference>
<dbReference type="Pfam" id="PF02629">
    <property type="entry name" value="CoA_binding"/>
    <property type="match status" value="1"/>
</dbReference>
<dbReference type="Pfam" id="PF00549">
    <property type="entry name" value="Ligase_CoA"/>
    <property type="match status" value="1"/>
</dbReference>
<dbReference type="PIRSF" id="PIRSF001553">
    <property type="entry name" value="SucCS_alpha"/>
    <property type="match status" value="1"/>
</dbReference>
<dbReference type="PRINTS" id="PR01798">
    <property type="entry name" value="SCOASYNTHASE"/>
</dbReference>
<dbReference type="SMART" id="SM00881">
    <property type="entry name" value="CoA_binding"/>
    <property type="match status" value="1"/>
</dbReference>
<dbReference type="SUPFAM" id="SSF51735">
    <property type="entry name" value="NAD(P)-binding Rossmann-fold domains"/>
    <property type="match status" value="1"/>
</dbReference>
<dbReference type="SUPFAM" id="SSF52210">
    <property type="entry name" value="Succinyl-CoA synthetase domains"/>
    <property type="match status" value="1"/>
</dbReference>
<dbReference type="PROSITE" id="PS00399">
    <property type="entry name" value="SUCCINYL_COA_LIG_2"/>
    <property type="match status" value="1"/>
</dbReference>
<comment type="function">
    <text evidence="2">Involved in the degradation of sulfoacetate (PubMed:37414148). Catalyzes the CoA- and ATP-dependent conversion of sulfoacetate to sulfoacetyl-CoA and ADP (PubMed:37414148). Cannot use other sulfonic and carboxylic acids, and shows only residual activity with 3-sulfopropanoate and malonic acid (PubMed:37414148).</text>
</comment>
<comment type="catalytic activity">
    <reaction evidence="2">
        <text>sulfoacetate + ATP + CoA = sulfoacetyl-CoA + ADP + phosphate</text>
        <dbReference type="Rhea" id="RHEA:76683"/>
        <dbReference type="ChEBI" id="CHEBI:30616"/>
        <dbReference type="ChEBI" id="CHEBI:43474"/>
        <dbReference type="ChEBI" id="CHEBI:57287"/>
        <dbReference type="ChEBI" id="CHEBI:58824"/>
        <dbReference type="ChEBI" id="CHEBI:61994"/>
        <dbReference type="ChEBI" id="CHEBI:456216"/>
    </reaction>
    <physiologicalReaction direction="left-to-right" evidence="2">
        <dbReference type="Rhea" id="RHEA:76684"/>
    </physiologicalReaction>
</comment>
<comment type="biophysicochemical properties">
    <kinetics>
        <KM evidence="2">1.07 mM for sulfoacetate</KM>
        <KM evidence="2">0.05 mM for ATP</KM>
        <KM evidence="2">0.008 mM for CoA</KM>
        <text evidence="2">kcat is 1.90 sec(-1) with sulfoacetate as substrate. kcat is 2.30 sec(-1) with ATP as substrate. kcat is 2.14 sec(-1) with CoA as substrate.</text>
    </kinetics>
    <phDependence>
        <text evidence="2">Optimum pH is 7.5.</text>
    </phDependence>
</comment>
<comment type="subunit">
    <text evidence="5">Forms a complex with SauC.</text>
</comment>
<comment type="induction">
    <text evidence="2">Induced in sulfoacetate-grown cells but not in thiosulfate-grown cells.</text>
</comment>
<comment type="similarity">
    <text evidence="4">Belongs to the succinate/malate CoA ligase alpha subunit family.</text>
</comment>
<proteinExistence type="evidence at protein level"/>
<sequence>MSIFIHKDSRVVVQGVTGKEGAFWAKHMKDMGTQVVFGVTPGKEGQDVDGIPVYHSVRRGIKDHPADVAMLFVPPKFTKDAVFEALDAGIKKICTIADGIPLHEAIQIRRAALSCGAMVVGGNTSGIISVGEAMLGTIPYWIDRVYKKGHVGVMTRSGSLTNEVTAEIVKGGFGVTTLIGVGGDPVPGTRFAELLPLYEADPDTHAVVIIGELGGTMEEEVAEAMEAKAFTKPLVAFMGGRTAPEGKRMGHAGAIVTGGRGTVKGKTEAIVKAGGKVAKRPSEVGALLKALLG</sequence>
<evidence type="ECO:0000250" key="1">
    <source>
        <dbReference type="UniProtKB" id="P0AGE9"/>
    </source>
</evidence>
<evidence type="ECO:0000269" key="2">
    <source>
    </source>
</evidence>
<evidence type="ECO:0000303" key="3">
    <source>
    </source>
</evidence>
<evidence type="ECO:0000305" key="4"/>
<evidence type="ECO:0000305" key="5">
    <source>
    </source>
</evidence>
<evidence type="ECO:0000312" key="6">
    <source>
        <dbReference type="EMBL" id="EFV43626.1"/>
    </source>
</evidence>
<protein>
    <recommendedName>
        <fullName evidence="3">ADP-forming sulfoacetate-CoA ligase subunit SauD</fullName>
        <ecNumber evidence="2">6.2.1.-</ecNumber>
    </recommendedName>
</protein>
<feature type="chain" id="PRO_0000459625" description="ADP-forming sulfoacetate-CoA ligase subunit SauD">
    <location>
        <begin position="1"/>
        <end position="293"/>
    </location>
</feature>
<feature type="active site" description="Tele-phosphohistidine intermediate" evidence="1">
    <location>
        <position position="251"/>
    </location>
</feature>
<feature type="binding site" evidence="1">
    <location>
        <begin position="17"/>
        <end position="20"/>
    </location>
    <ligand>
        <name>CoA</name>
        <dbReference type="ChEBI" id="CHEBI:57287"/>
    </ligand>
</feature>
<feature type="binding site" evidence="1">
    <location>
        <position position="43"/>
    </location>
    <ligand>
        <name>CoA</name>
        <dbReference type="ChEBI" id="CHEBI:57287"/>
    </ligand>
</feature>
<feature type="binding site" evidence="1">
    <location>
        <begin position="96"/>
        <end position="98"/>
    </location>
    <ligand>
        <name>CoA</name>
        <dbReference type="ChEBI" id="CHEBI:57287"/>
    </ligand>
</feature>
<gene>
    <name evidence="3" type="primary">sauD</name>
    <name evidence="6" type="ORF">HMPREF0179_02565</name>
</gene>
<organism>
    <name type="scientific">Bilophila wadsworthia (strain 3_1_6)</name>
    <dbReference type="NCBI Taxonomy" id="563192"/>
    <lineage>
        <taxon>Bacteria</taxon>
        <taxon>Pseudomonadati</taxon>
        <taxon>Thermodesulfobacteriota</taxon>
        <taxon>Desulfovibrionia</taxon>
        <taxon>Desulfovibrionales</taxon>
        <taxon>Desulfovibrionaceae</taxon>
        <taxon>Bilophila</taxon>
    </lineage>
</organism>
<reference key="1">
    <citation type="submission" date="2013-04" db="EMBL/GenBank/DDBJ databases">
        <title>The Genome Sequence of Bilophila wadsworthia 3_1_6.</title>
        <authorList>
            <consortium name="The Broad Institute Genomics Platform"/>
            <person name="Earl A."/>
            <person name="Ward D."/>
            <person name="Feldgarden M."/>
            <person name="Gevers D."/>
            <person name="Sibley C."/>
            <person name="Strauss J."/>
            <person name="Allen-Vercoe E."/>
            <person name="Walker B."/>
            <person name="Young S."/>
            <person name="Zeng Q."/>
            <person name="Gargeya S."/>
            <person name="Fitzgerald M."/>
            <person name="Haas B."/>
            <person name="Abouelleil A."/>
            <person name="Allen A.W."/>
            <person name="Alvarado L."/>
            <person name="Arachchi H.M."/>
            <person name="Berlin A.M."/>
            <person name="Chapman S.B."/>
            <person name="Gainer-Dewar J."/>
            <person name="Goldberg J."/>
            <person name="Griggs A."/>
            <person name="Gujja S."/>
            <person name="Hansen M."/>
            <person name="Howarth C."/>
            <person name="Imamovic A."/>
            <person name="Ireland A."/>
            <person name="Larimer J."/>
            <person name="McCowan C."/>
            <person name="Murphy C."/>
            <person name="Pearson M."/>
            <person name="Poon T.W."/>
            <person name="Priest M."/>
            <person name="Roberts A."/>
            <person name="Saif S."/>
            <person name="Shea T."/>
            <person name="Sisk P."/>
            <person name="Sykes S."/>
            <person name="Wortman J."/>
            <person name="Nusbaum C."/>
            <person name="Birren B."/>
        </authorList>
    </citation>
    <scope>NUCLEOTIDE SEQUENCE [LARGE SCALE GENOMIC DNA]</scope>
    <source>
        <strain>3_1_6</strain>
    </source>
</reference>
<reference key="2">
    <citation type="journal article" date="2023" name="J. Biol. Chem.">
        <title>Isethionate is an intermediate in the degradation of sulfoacetate by the human gut pathobiont Bilophila wadsworthia.</title>
        <authorList>
            <person name="Liu X."/>
            <person name="Wei Y."/>
            <person name="Zhang J."/>
            <person name="Zhou Y."/>
            <person name="Du Y."/>
            <person name="Zhang Y."/>
        </authorList>
    </citation>
    <scope>FUNCTION</scope>
    <scope>CATALYTIC ACTIVITY</scope>
    <scope>BIOPHYSICOCHEMICAL PROPERTIES</scope>
    <scope>INDUCTION</scope>
    <source>
        <strain>3_1_6</strain>
    </source>
</reference>
<name>SAUD_BILW3</name>
<accession>E5Y8P7</accession>
<keyword id="KW-0436">Ligase</keyword>
<keyword id="KW-0547">Nucleotide-binding</keyword>
<keyword id="KW-1185">Reference proteome</keyword>